<name>TYPH_NITHX</name>
<dbReference type="EC" id="2.4.2.4" evidence="1"/>
<dbReference type="EMBL" id="CP000319">
    <property type="protein sequence ID" value="ABE62708.1"/>
    <property type="status" value="ALT_INIT"/>
    <property type="molecule type" value="Genomic_DNA"/>
</dbReference>
<dbReference type="RefSeq" id="WP_041357912.1">
    <property type="nucleotide sequence ID" value="NC_007964.1"/>
</dbReference>
<dbReference type="SMR" id="Q1QM39"/>
<dbReference type="STRING" id="323097.Nham_1900"/>
<dbReference type="KEGG" id="nha:Nham_1900"/>
<dbReference type="eggNOG" id="COG0213">
    <property type="taxonomic scope" value="Bacteria"/>
</dbReference>
<dbReference type="HOGENOM" id="CLU_025040_6_0_5"/>
<dbReference type="OrthoDB" id="341217at2"/>
<dbReference type="Proteomes" id="UP000001953">
    <property type="component" value="Chromosome"/>
</dbReference>
<dbReference type="GO" id="GO:0005829">
    <property type="term" value="C:cytosol"/>
    <property type="evidence" value="ECO:0007669"/>
    <property type="project" value="TreeGrafter"/>
</dbReference>
<dbReference type="GO" id="GO:0004645">
    <property type="term" value="F:1,4-alpha-oligoglucan phosphorylase activity"/>
    <property type="evidence" value="ECO:0007669"/>
    <property type="project" value="InterPro"/>
</dbReference>
<dbReference type="GO" id="GO:0009032">
    <property type="term" value="F:thymidine phosphorylase activity"/>
    <property type="evidence" value="ECO:0007669"/>
    <property type="project" value="UniProtKB-UniRule"/>
</dbReference>
<dbReference type="GO" id="GO:0006206">
    <property type="term" value="P:pyrimidine nucleobase metabolic process"/>
    <property type="evidence" value="ECO:0007669"/>
    <property type="project" value="InterPro"/>
</dbReference>
<dbReference type="GO" id="GO:0006213">
    <property type="term" value="P:pyrimidine nucleoside metabolic process"/>
    <property type="evidence" value="ECO:0007669"/>
    <property type="project" value="InterPro"/>
</dbReference>
<dbReference type="Gene3D" id="1.20.970.50">
    <property type="match status" value="1"/>
</dbReference>
<dbReference type="Gene3D" id="3.40.1030.10">
    <property type="entry name" value="Nucleoside phosphorylase/phosphoribosyltransferase catalytic domain"/>
    <property type="match status" value="1"/>
</dbReference>
<dbReference type="Gene3D" id="3.90.1170.30">
    <property type="entry name" value="Pyrimidine nucleoside phosphorylase-like, C-terminal domain"/>
    <property type="match status" value="1"/>
</dbReference>
<dbReference type="HAMAP" id="MF_00703">
    <property type="entry name" value="Thymid_phosp_2"/>
    <property type="match status" value="1"/>
</dbReference>
<dbReference type="InterPro" id="IPR000312">
    <property type="entry name" value="Glycosyl_Trfase_fam3"/>
</dbReference>
<dbReference type="InterPro" id="IPR017459">
    <property type="entry name" value="Glycosyl_Trfase_fam3_N_dom"/>
</dbReference>
<dbReference type="InterPro" id="IPR036320">
    <property type="entry name" value="Glycosyl_Trfase_fam3_N_dom_sf"/>
</dbReference>
<dbReference type="InterPro" id="IPR035902">
    <property type="entry name" value="Nuc_phospho_transferase"/>
</dbReference>
<dbReference type="InterPro" id="IPR036566">
    <property type="entry name" value="PYNP-like_C_sf"/>
</dbReference>
<dbReference type="InterPro" id="IPR013102">
    <property type="entry name" value="PYNP_C"/>
</dbReference>
<dbReference type="InterPro" id="IPR017872">
    <property type="entry name" value="Pyrmidine_PPase_CS"/>
</dbReference>
<dbReference type="InterPro" id="IPR028579">
    <property type="entry name" value="Thym_Pase_Put"/>
</dbReference>
<dbReference type="InterPro" id="IPR013466">
    <property type="entry name" value="Thymidine/AMP_Pase"/>
</dbReference>
<dbReference type="InterPro" id="IPR000053">
    <property type="entry name" value="Thymidine/pyrmidine_PPase"/>
</dbReference>
<dbReference type="NCBIfam" id="TIGR02645">
    <property type="entry name" value="ARCH_P_rylase"/>
    <property type="match status" value="1"/>
</dbReference>
<dbReference type="NCBIfam" id="NF003338">
    <property type="entry name" value="PRK04350.1"/>
    <property type="match status" value="1"/>
</dbReference>
<dbReference type="PANTHER" id="PTHR10515">
    <property type="entry name" value="THYMIDINE PHOSPHORYLASE"/>
    <property type="match status" value="1"/>
</dbReference>
<dbReference type="PANTHER" id="PTHR10515:SF0">
    <property type="entry name" value="THYMIDINE PHOSPHORYLASE"/>
    <property type="match status" value="1"/>
</dbReference>
<dbReference type="Pfam" id="PF02885">
    <property type="entry name" value="Glycos_trans_3N"/>
    <property type="match status" value="1"/>
</dbReference>
<dbReference type="Pfam" id="PF00591">
    <property type="entry name" value="Glycos_transf_3"/>
    <property type="match status" value="1"/>
</dbReference>
<dbReference type="Pfam" id="PF07831">
    <property type="entry name" value="PYNP_C"/>
    <property type="match status" value="1"/>
</dbReference>
<dbReference type="SMART" id="SM00941">
    <property type="entry name" value="PYNP_C"/>
    <property type="match status" value="1"/>
</dbReference>
<dbReference type="SUPFAM" id="SSF52418">
    <property type="entry name" value="Nucleoside phosphorylase/phosphoribosyltransferase catalytic domain"/>
    <property type="match status" value="1"/>
</dbReference>
<dbReference type="SUPFAM" id="SSF47648">
    <property type="entry name" value="Nucleoside phosphorylase/phosphoribosyltransferase N-terminal domain"/>
    <property type="match status" value="1"/>
</dbReference>
<dbReference type="SUPFAM" id="SSF54680">
    <property type="entry name" value="Pyrimidine nucleoside phosphorylase C-terminal domain"/>
    <property type="match status" value="1"/>
</dbReference>
<dbReference type="PROSITE" id="PS00647">
    <property type="entry name" value="THYMID_PHOSPHORYLASE"/>
    <property type="match status" value="1"/>
</dbReference>
<reference key="1">
    <citation type="submission" date="2006-03" db="EMBL/GenBank/DDBJ databases">
        <title>Complete sequence of chromosome of Nitrobacter hamburgensis X14.</title>
        <authorList>
            <consortium name="US DOE Joint Genome Institute"/>
            <person name="Copeland A."/>
            <person name="Lucas S."/>
            <person name="Lapidus A."/>
            <person name="Barry K."/>
            <person name="Detter J.C."/>
            <person name="Glavina del Rio T."/>
            <person name="Hammon N."/>
            <person name="Israni S."/>
            <person name="Dalin E."/>
            <person name="Tice H."/>
            <person name="Pitluck S."/>
            <person name="Chain P."/>
            <person name="Malfatti S."/>
            <person name="Shin M."/>
            <person name="Vergez L."/>
            <person name="Schmutz J."/>
            <person name="Larimer F."/>
            <person name="Land M."/>
            <person name="Hauser L."/>
            <person name="Kyrpides N."/>
            <person name="Ivanova N."/>
            <person name="Ward B."/>
            <person name="Arp D."/>
            <person name="Klotz M."/>
            <person name="Stein L."/>
            <person name="O'Mullan G."/>
            <person name="Starkenburg S."/>
            <person name="Sayavedra L."/>
            <person name="Poret-Peterson A.T."/>
            <person name="Gentry M.E."/>
            <person name="Bruce D."/>
            <person name="Richardson P."/>
        </authorList>
    </citation>
    <scope>NUCLEOTIDE SEQUENCE [LARGE SCALE GENOMIC DNA]</scope>
    <source>
        <strain>DSM 10229 / NCIMB 13809 / X14</strain>
    </source>
</reference>
<gene>
    <name type="ordered locus">Nham_1900</name>
</gene>
<keyword id="KW-0328">Glycosyltransferase</keyword>
<keyword id="KW-1185">Reference proteome</keyword>
<keyword id="KW-0808">Transferase</keyword>
<proteinExistence type="inferred from homology"/>
<protein>
    <recommendedName>
        <fullName evidence="1">Putative thymidine phosphorylase</fullName>
        <ecNumber evidence="1">2.4.2.4</ecNumber>
    </recommendedName>
    <alternativeName>
        <fullName evidence="1">TdRPase</fullName>
    </alternativeName>
</protein>
<evidence type="ECO:0000255" key="1">
    <source>
        <dbReference type="HAMAP-Rule" id="MF_00703"/>
    </source>
</evidence>
<evidence type="ECO:0000305" key="2"/>
<comment type="catalytic activity">
    <reaction evidence="1">
        <text>thymidine + phosphate = 2-deoxy-alpha-D-ribose 1-phosphate + thymine</text>
        <dbReference type="Rhea" id="RHEA:16037"/>
        <dbReference type="ChEBI" id="CHEBI:17748"/>
        <dbReference type="ChEBI" id="CHEBI:17821"/>
        <dbReference type="ChEBI" id="CHEBI:43474"/>
        <dbReference type="ChEBI" id="CHEBI:57259"/>
        <dbReference type="EC" id="2.4.2.4"/>
    </reaction>
</comment>
<comment type="similarity">
    <text evidence="1">Belongs to the thymidine/pyrimidine-nucleoside phosphorylase family. Type 2 subfamily.</text>
</comment>
<comment type="sequence caution" evidence="2">
    <conflict type="erroneous initiation">
        <sequence resource="EMBL-CDS" id="ABE62708"/>
    </conflict>
</comment>
<accession>Q1QM39</accession>
<feature type="chain" id="PRO_0000314704" description="Putative thymidine phosphorylase">
    <location>
        <begin position="1"/>
        <end position="510"/>
    </location>
</feature>
<organism>
    <name type="scientific">Nitrobacter hamburgensis (strain DSM 10229 / NCIMB 13809 / X14)</name>
    <dbReference type="NCBI Taxonomy" id="323097"/>
    <lineage>
        <taxon>Bacteria</taxon>
        <taxon>Pseudomonadati</taxon>
        <taxon>Pseudomonadota</taxon>
        <taxon>Alphaproteobacteria</taxon>
        <taxon>Hyphomicrobiales</taxon>
        <taxon>Nitrobacteraceae</taxon>
        <taxon>Nitrobacter</taxon>
    </lineage>
</organism>
<sequence length="510" mass="54756">MNGTDLPRLQPKIRRVNLDTGRENVVVISRHSAALRPEIFRGFSRVELRRNAKIMLATLIITDDDSLVGPDDLGLSEPAFRRFAEPVGSAVTIAPAASPASLDAVRAKIMGQTFSAVDISAIIDDLTHYRYSDMEIAAFLISSASFMTNGELIALVDSMARAGTQLKWRNPIIVDKHCIGGIPGNRTSMIVVPIVAAHGLTIPKTSSRAITSPAGTADTMEMLARVDVGVEEMKDIVAACRGCLVWGGHVNLSPADDILISVERPLGLDTREQMVASILSKKLAAGSTHLLIDLPVGPTAKLVNEMEAMRLRKLFEFVGDHYGISVEVVVTDGRQPIGNGIGPVLEAQDVMAVLANDPEAPADLREKSLRLAAHLLEYDPKLRGGSGYARARELLDSGAALKQMQKIIDAQGPPTCCTDLGNLTFDVTASRDGFVSGINCLQLNRLARIAGAPIDKGAGIRLFKKIGDRVQQGEPLYRIHAFERSGRDLAAAGTTAYTIDSEESNLEATP</sequence>